<accession>B8NL21</accession>
<dbReference type="EMBL" id="EQ963480">
    <property type="protein sequence ID" value="EED49523.1"/>
    <property type="molecule type" value="Genomic_DNA"/>
</dbReference>
<dbReference type="EMBL" id="CP059870">
    <property type="protein sequence ID" value="QMW33429.1"/>
    <property type="molecule type" value="Genomic_DNA"/>
</dbReference>
<dbReference type="RefSeq" id="XP_002381424.1">
    <property type="nucleotide sequence ID" value="XM_002381383.1"/>
</dbReference>
<dbReference type="SMR" id="B8NL21"/>
<dbReference type="STRING" id="332952.B8NL21"/>
<dbReference type="EnsemblFungi" id="EED49523">
    <property type="protein sequence ID" value="EED49523"/>
    <property type="gene ID" value="AFLA_096050"/>
</dbReference>
<dbReference type="VEuPathDB" id="FungiDB:AFLA_009846"/>
<dbReference type="eggNOG" id="ENOG502QQ7I">
    <property type="taxonomic scope" value="Eukaryota"/>
</dbReference>
<dbReference type="HOGENOM" id="CLU_019691_1_0_1"/>
<dbReference type="OMA" id="CDGHEPC"/>
<dbReference type="GO" id="GO:0005634">
    <property type="term" value="C:nucleus"/>
    <property type="evidence" value="ECO:0007669"/>
    <property type="project" value="UniProtKB-SubCell"/>
</dbReference>
<dbReference type="GO" id="GO:0003677">
    <property type="term" value="F:DNA binding"/>
    <property type="evidence" value="ECO:0007669"/>
    <property type="project" value="UniProtKB-KW"/>
</dbReference>
<dbReference type="GO" id="GO:0000981">
    <property type="term" value="F:DNA-binding transcription factor activity, RNA polymerase II-specific"/>
    <property type="evidence" value="ECO:0007669"/>
    <property type="project" value="InterPro"/>
</dbReference>
<dbReference type="GO" id="GO:0008270">
    <property type="term" value="F:zinc ion binding"/>
    <property type="evidence" value="ECO:0007669"/>
    <property type="project" value="InterPro"/>
</dbReference>
<dbReference type="GO" id="GO:0006351">
    <property type="term" value="P:DNA-templated transcription"/>
    <property type="evidence" value="ECO:0007669"/>
    <property type="project" value="InterPro"/>
</dbReference>
<dbReference type="GO" id="GO:0009893">
    <property type="term" value="P:positive regulation of metabolic process"/>
    <property type="evidence" value="ECO:0007669"/>
    <property type="project" value="UniProtKB-ARBA"/>
</dbReference>
<dbReference type="GO" id="GO:0009410">
    <property type="term" value="P:response to xenobiotic stimulus"/>
    <property type="evidence" value="ECO:0007669"/>
    <property type="project" value="TreeGrafter"/>
</dbReference>
<dbReference type="CDD" id="cd12148">
    <property type="entry name" value="fungal_TF_MHR"/>
    <property type="match status" value="1"/>
</dbReference>
<dbReference type="CDD" id="cd00067">
    <property type="entry name" value="GAL4"/>
    <property type="match status" value="1"/>
</dbReference>
<dbReference type="Gene3D" id="4.10.240.10">
    <property type="entry name" value="Zn(2)-C6 fungal-type DNA-binding domain"/>
    <property type="match status" value="1"/>
</dbReference>
<dbReference type="InterPro" id="IPR052478">
    <property type="entry name" value="Metabolite_Synth_Reg"/>
</dbReference>
<dbReference type="InterPro" id="IPR007219">
    <property type="entry name" value="Transcription_factor_dom_fun"/>
</dbReference>
<dbReference type="InterPro" id="IPR036864">
    <property type="entry name" value="Zn2-C6_fun-type_DNA-bd_sf"/>
</dbReference>
<dbReference type="InterPro" id="IPR001138">
    <property type="entry name" value="Zn2Cys6_DnaBD"/>
</dbReference>
<dbReference type="PANTHER" id="PTHR31779">
    <property type="entry name" value="2-NITROPROPANE DIOXYGENASE FAMILY, PUTATIVE (AFU_ORTHOLOGUE AFUA_2G17430)-RELATED"/>
    <property type="match status" value="1"/>
</dbReference>
<dbReference type="PANTHER" id="PTHR31779:SF5">
    <property type="entry name" value="ZN(II)2CYS6 TRANSCRIPTION FACTOR (EUROFUNG)"/>
    <property type="match status" value="1"/>
</dbReference>
<dbReference type="Pfam" id="PF04082">
    <property type="entry name" value="Fungal_trans"/>
    <property type="match status" value="1"/>
</dbReference>
<dbReference type="Pfam" id="PF00172">
    <property type="entry name" value="Zn_clus"/>
    <property type="match status" value="1"/>
</dbReference>
<dbReference type="SMART" id="SM00906">
    <property type="entry name" value="Fungal_trans"/>
    <property type="match status" value="1"/>
</dbReference>
<dbReference type="SMART" id="SM00066">
    <property type="entry name" value="GAL4"/>
    <property type="match status" value="1"/>
</dbReference>
<dbReference type="SUPFAM" id="SSF57701">
    <property type="entry name" value="Zn2/Cys6 DNA-binding domain"/>
    <property type="match status" value="1"/>
</dbReference>
<dbReference type="PROSITE" id="PS00463">
    <property type="entry name" value="ZN2_CY6_FUNGAL_1"/>
    <property type="match status" value="1"/>
</dbReference>
<dbReference type="PROSITE" id="PS50048">
    <property type="entry name" value="ZN2_CY6_FUNGAL_2"/>
    <property type="match status" value="1"/>
</dbReference>
<keyword id="KW-0238">DNA-binding</keyword>
<keyword id="KW-0479">Metal-binding</keyword>
<keyword id="KW-0539">Nucleus</keyword>
<keyword id="KW-0804">Transcription</keyword>
<keyword id="KW-0805">Transcription regulation</keyword>
<keyword id="KW-0862">Zinc</keyword>
<evidence type="ECO:0000255" key="1">
    <source>
        <dbReference type="PROSITE-ProRule" id="PRU00227"/>
    </source>
</evidence>
<evidence type="ECO:0000256" key="2">
    <source>
        <dbReference type="SAM" id="MobiDB-lite"/>
    </source>
</evidence>
<evidence type="ECO:0000269" key="3">
    <source>
    </source>
</evidence>
<evidence type="ECO:0000269" key="4">
    <source>
    </source>
</evidence>
<evidence type="ECO:0000269" key="5">
    <source>
    </source>
</evidence>
<evidence type="ECO:0000269" key="6">
    <source>
    </source>
</evidence>
<evidence type="ECO:0000303" key="7">
    <source>
    </source>
</evidence>
<name>KOJR_ASPFN</name>
<reference key="1">
    <citation type="journal article" date="2015" name="Genome Announc.">
        <title>Genome sequence of Aspergillus flavus NRRL 3357, a strain that causes aflatoxin contamination of food and feed.</title>
        <authorList>
            <person name="Nierman W.C."/>
            <person name="Yu J."/>
            <person name="Fedorova-Abrams N.D."/>
            <person name="Losada L."/>
            <person name="Cleveland T.E."/>
            <person name="Bhatnagar D."/>
            <person name="Bennett J.W."/>
            <person name="Dean R."/>
            <person name="Payne G.A."/>
        </authorList>
    </citation>
    <scope>NUCLEOTIDE SEQUENCE [LARGE SCALE GENOMIC DNA]</scope>
    <source>
        <strain>ATCC 200026 / FGSC A1120 / IAM 13836 / NRRL 3357 / JCM 12722 / SRRC 167</strain>
    </source>
</reference>
<reference key="2">
    <citation type="submission" date="2020-07" db="EMBL/GenBank/DDBJ databases">
        <title>Two New Chromosome-Level Aspergillus flavus Reference Genomes Reveal a Large Insertion Potentially Contributing to Isolate Stress Tolerance and Aflatoxin Production.</title>
        <authorList>
            <person name="Fountain J.C."/>
            <person name="Clevenger J.P."/>
            <person name="Nadon B."/>
            <person name="Youngblood R.C."/>
            <person name="Korani W."/>
            <person name="Chang P.-K."/>
            <person name="Starr D."/>
            <person name="Wang H."/>
            <person name="Isett B."/>
            <person name="Johnston H.R."/>
            <person name="Wiggins R."/>
            <person name="Chu Y."/>
            <person name="Agarwal G."/>
            <person name="Kemerait R.C."/>
            <person name="Pandey M.K."/>
            <person name="Bhatnagar D."/>
            <person name="Ozias-Akins P."/>
            <person name="Varshney R.K."/>
            <person name="Scheffler B.E."/>
            <person name="Vaughn J.N."/>
            <person name="Guo B."/>
        </authorList>
    </citation>
    <scope>NUCLEOTIDE SEQUENCE [LARGE SCALE GENOMIC DNA]</scope>
    <source>
        <strain>ATCC 200026 / FGSC A1120 / IAM 13836 / NRRL 3357 / JCM 12722 / SRRC 167</strain>
    </source>
</reference>
<reference key="3">
    <citation type="journal article" date="1994" name="J. Pharm. Pharmacol.">
        <title>Kojic acid, a cosmetic skin whitening agent, is a slow-binding inhibitor of catecholase activity of tyrosinase.</title>
        <authorList>
            <person name="Cabanes J."/>
            <person name="Chazarra S."/>
            <person name="Garcia-Carmona F."/>
        </authorList>
    </citation>
    <scope>BIOTECHNOLOGY</scope>
</reference>
<reference key="4">
    <citation type="journal article" date="2006" name="Nat. Prod. Rep.">
        <title>From miso, sake and shoyu to cosmetics: a century of science for kojic acid.</title>
        <authorList>
            <person name="Bentley R."/>
        </authorList>
    </citation>
    <scope>REVIEW ON BIOTECHNOLOGY</scope>
</reference>
<reference key="5">
    <citation type="journal article" date="2016" name="J. Microbiol. Biotechnol.">
        <title>Nematicidal activity of kojic acid produced by Aspergillus oryzae against Meloidogyne incognita.</title>
        <authorList>
            <person name="Kim T.Y."/>
            <person name="Jang J.Y."/>
            <person name="Jeon S.J."/>
            <person name="Lee H.W."/>
            <person name="Bae C.H."/>
            <person name="Yeo J.H."/>
            <person name="Lee H.B."/>
            <person name="Kim I.S."/>
            <person name="Park H.W."/>
            <person name="Kim J.C."/>
        </authorList>
    </citation>
    <scope>BIOTECHNOLOGY</scope>
</reference>
<reference key="6">
    <citation type="journal article" date="2023" name="J. Fungi">
        <title>Kojic Acid Gene Clusters and the Transcriptional Activation Mechanism of Aspergillus flavus KojR on Expression of Clustered Genes.</title>
        <authorList>
            <person name="Chang P.K."/>
            <person name="Scharfenstein L.L."/>
            <person name="Mahoney N."/>
            <person name="Kong Q."/>
        </authorList>
    </citation>
    <scope>FUNCTION</scope>
    <scope>DISRUPTION PHENOTYPE</scope>
    <scope>DNA-BONSING</scope>
</reference>
<organism>
    <name type="scientific">Aspergillus flavus (strain ATCC 200026 / FGSC A1120 / IAM 13836 / NRRL 3357 / JCM 12722 / SRRC 167)</name>
    <dbReference type="NCBI Taxonomy" id="332952"/>
    <lineage>
        <taxon>Eukaryota</taxon>
        <taxon>Fungi</taxon>
        <taxon>Dikarya</taxon>
        <taxon>Ascomycota</taxon>
        <taxon>Pezizomycotina</taxon>
        <taxon>Eurotiomycetes</taxon>
        <taxon>Eurotiomycetidae</taxon>
        <taxon>Eurotiales</taxon>
        <taxon>Aspergillaceae</taxon>
        <taxon>Aspergillus</taxon>
        <taxon>Aspergillus subgen. Circumdati</taxon>
    </lineage>
</organism>
<gene>
    <name evidence="7" type="primary">kojR</name>
    <name type="ORF">AFLA_096050</name>
    <name type="ORF">G4B84_008860</name>
</gene>
<feature type="chain" id="PRO_0000458979" description="Transcription factor kojR">
    <location>
        <begin position="1"/>
        <end position="555"/>
    </location>
</feature>
<feature type="DNA-binding region" description="Zn(2)-C6 fungal-type" evidence="1">
    <location>
        <begin position="21"/>
        <end position="47"/>
    </location>
</feature>
<feature type="region of interest" description="Disordered" evidence="2">
    <location>
        <begin position="51"/>
        <end position="73"/>
    </location>
</feature>
<proteinExistence type="evidence at protein level"/>
<sequence>MSLNTDDSGRIRTRQRAKRACETCKLRKRKCDGHEPCTYCLRYEYQCTFKPHPRRKPAASKSSARPSEEEDSPKFLDRVDANQEHMEANSGTAFPHLLGMRLNPQGAPKVYGFSWNLGPRDEPLEPFTNLTDLISREEMEDLASHYLKKIHPVYAVLDPDTLRQKIVARWHDPATAASYDPILCSVAALGSLYSGHQEHPKEGALVQSAKEMLETTRISKTTLLHHATAWILRTIYLRSTNCPHASWMASCSTMHIIEAIGAHQDPELVSLVYSDTADVSVNDESQRRLFWVATVLNSWISYEYGRSRVILRGVSCKPPLPRTGDFTTDLISMYQISERLDPDQNNKLSDLEDALSRVERLTLSHDALILSQSNLALTIYRRLRVASSNISNDILTRIIRLGNDGLEAAVRLAEDRSPWWHVANIPFQFLCILLAIDTRESLSYVGPALRSFRAITRHYSTPTLHTALETIESLVRLSQNKKERDLTLLRDSMQQEDPGLTEQGSTTSQAFNDASWLGATGDLTLPDNFDWDWNVFLDTQVPFFDEGEAGGQRYR</sequence>
<protein>
    <recommendedName>
        <fullName evidence="7">Transcription factor kojR</fullName>
    </recommendedName>
    <alternativeName>
        <fullName evidence="7">Kojic acid biosynthesis cluster protein R</fullName>
    </alternativeName>
    <alternativeName>
        <fullName evidence="7">Kojic acid biosynthesis cluster regulator</fullName>
    </alternativeName>
</protein>
<comment type="function">
    <text evidence="5">Transcription factor that regulates the gene cluster that mediates the biosynthesis of 5-hydroxy-2-hydroxymethyl-1,4-pyrone, also know as kojic acid, a by-product in the fermentation process of malting rice that acts as a chelation agent (PubMed:36836373). Mediates the expression of kojA and kojT via binding of an 11-nucleotide palindromic sequence, 5'-CGRCTWAGYCG-3' (R=A/G, W=A/T, Y=C/T) within the target gene promoters (PubMed:36836373).</text>
</comment>
<comment type="subcellular location">
    <subcellularLocation>
        <location evidence="1">Nucleus</location>
    </subcellularLocation>
</comment>
<comment type="disruption phenotype">
    <text evidence="5">Impairs the production of kojic acid.</text>
</comment>
<comment type="biotechnology">
    <text evidence="3 4 6">Kojic acid can be used for several biotechnological applications, including use as an antibiotic, as an additive to prevent browning of food materials, and as an antioxidant (PubMed:17119644). Kojic acid is also interesting as an inhibitor of tyrosinase (PubMed:7714722). Finally, kojic acid has also been shown to have strong nematicidal activity (PubMed:27197670).</text>
</comment>